<reference key="1">
    <citation type="journal article" date="1992" name="Virology">
        <title>Subacute sclerosing panencephalitis is typically characterized by alterations in the fusion protein cytoplasmic domain of the persisting measles virus.</title>
        <authorList>
            <person name="Schmid A."/>
            <person name="Spielhofer P."/>
            <person name="Cattaneo R."/>
            <person name="Baczko K."/>
            <person name="Ter Meulen V."/>
            <person name="Billeter M.A."/>
        </authorList>
    </citation>
    <scope>NUCLEOTIDE SEQUENCE [GENOMIC RNA]</scope>
</reference>
<gene>
    <name type="primary">N</name>
    <name type="synonym">NP</name>
</gene>
<organism>
    <name type="scientific">Measles virus (strain IP-3-Ca)</name>
    <name type="common">MeV</name>
    <name type="synonym">Subacute sclerose panencephalitis virus</name>
    <dbReference type="NCBI Taxonomy" id="11237"/>
    <lineage>
        <taxon>Viruses</taxon>
        <taxon>Riboviria</taxon>
        <taxon>Orthornavirae</taxon>
        <taxon>Negarnaviricota</taxon>
        <taxon>Haploviricotina</taxon>
        <taxon>Monjiviricetes</taxon>
        <taxon>Mononegavirales</taxon>
        <taxon>Paramyxoviridae</taxon>
        <taxon>Orthoparamyxovirinae</taxon>
        <taxon>Morbillivirus</taxon>
        <taxon>Morbillivirus hominis</taxon>
        <taxon>Measles morbillivirus</taxon>
    </lineage>
</organism>
<organismHost>
    <name type="scientific">Homo sapiens</name>
    <name type="common">Human</name>
    <dbReference type="NCBI Taxonomy" id="9606"/>
</organismHost>
<feature type="chain" id="PRO_0000142657" description="Nucleoprotein">
    <location>
        <begin position="1"/>
        <end position="525"/>
    </location>
</feature>
<feature type="region of interest" description="Ncore" evidence="3">
    <location>
        <begin position="1"/>
        <end position="403"/>
    </location>
</feature>
<feature type="region of interest" description="RNA packaging and organization of the helical nucleocapsid" evidence="8">
    <location>
        <begin position="1"/>
        <end position="375"/>
    </location>
</feature>
<feature type="region of interest" description="Homomultimerization" evidence="5">
    <location>
        <begin position="1"/>
        <end position="36"/>
    </location>
</feature>
<feature type="region of interest" description="Homomultimerization" evidence="5">
    <location>
        <begin position="373"/>
        <end position="391"/>
    </location>
</feature>
<feature type="region of interest" description="Ntail" evidence="3">
    <location>
        <begin position="404"/>
        <end position="525"/>
    </location>
</feature>
<feature type="region of interest" description="Disordered" evidence="10">
    <location>
        <begin position="418"/>
        <end position="525"/>
    </location>
</feature>
<feature type="region of interest" description="Interaction with the phosphoprotein" evidence="7">
    <location>
        <begin position="477"/>
        <end position="505"/>
    </location>
</feature>
<feature type="short sequence motif" description="Nuclear localization signal" evidence="2">
    <location>
        <begin position="70"/>
        <end position="77"/>
    </location>
</feature>
<feature type="short sequence motif" description="Nuclear export signal" evidence="2">
    <location>
        <begin position="425"/>
        <end position="440"/>
    </location>
</feature>
<feature type="compositionally biased region" description="Basic and acidic residues" evidence="10">
    <location>
        <begin position="433"/>
        <end position="452"/>
    </location>
</feature>
<feature type="binding site" evidence="7">
    <location>
        <position position="180"/>
    </location>
    <ligand>
        <name>RNA</name>
        <dbReference type="ChEBI" id="CHEBI:33697"/>
    </ligand>
</feature>
<feature type="binding site" evidence="7">
    <location>
        <position position="195"/>
    </location>
    <ligand>
        <name>RNA</name>
        <dbReference type="ChEBI" id="CHEBI:33697"/>
    </ligand>
</feature>
<feature type="binding site" evidence="7">
    <location>
        <position position="202"/>
    </location>
    <ligand>
        <name>RNA</name>
        <dbReference type="ChEBI" id="CHEBI:33697"/>
    </ligand>
</feature>
<feature type="binding site" evidence="7">
    <location>
        <position position="260"/>
    </location>
    <ligand>
        <name>RNA</name>
        <dbReference type="ChEBI" id="CHEBI:33697"/>
    </ligand>
</feature>
<feature type="binding site" evidence="7">
    <location>
        <position position="351"/>
    </location>
    <ligand>
        <name>RNA</name>
        <dbReference type="ChEBI" id="CHEBI:33697"/>
    </ligand>
</feature>
<feature type="modified residue" description="Phosphothreonine; by host" evidence="9">
    <location>
        <position position="279"/>
    </location>
</feature>
<comment type="function">
    <text evidence="3 4 5 9">Forms the helical nucleocapsid (NC) in a ratio of 1 N per 6 ribonucleotides, protecting the genome from nucleases (By similarity). The nucleocapsid (NC) has a helical structure with either 12.35 or 11.64 N per turn, approximately 20 nm in diameter, with a hollow central cavity approximately 5 nm in diameter (By similarity). The encapsidated genomic RNA serves as template for transcription and replication; encapsidation by N is coupled to RNA synthesis (By similarity). Forms the encapsidation complex with the phosphoprotein protein P (By similarity). Before encapsidation, the newly synthesized free N protein, so-called N0, is chaperoned by P (By similarity). Participates, together with P, in the formation of viral factories (viroplasms), which are large inclusions in the host cytoplasm where replication takes place (By similarity). N is released in the blood following lysis of measles infected cells, it interacts then with human FCGR2B on immune cells, inducing apoptosis and blocking inflammatory immune response (By similarity).</text>
</comment>
<comment type="subunit">
    <text evidence="1 3 4 6 7 8 9">Homomultimer; forms the nucleocapsid (By similarity). Binds to viral genomic RNA (By similarity). N0 interacts (via Ncore) with the phosphoprotein (via N-terminus); this interaction allows P to chaperon N0 to avoid N polymerization and non-specific RNA binding before encapsidation (By similarity). Interacts (via the Ntail) as N-RNA template with the phosphoprotein (via C-terminus XD); this interaction maintains the P/L complex anchored to the nucleocapsid template during the sequential transcription (By similarity). Interacts with the phosphoprotein; this interaction leads to the formation of membraneless organelles that function as viral replication factories (By similarity). Interacts with human FCGR2B protein (By similarity). Interacts with human PPIA/CYPA and PPIB/CYPB (By similarity).</text>
</comment>
<comment type="subcellular location">
    <subcellularLocation>
        <location evidence="2">Virion</location>
    </subcellularLocation>
    <subcellularLocation>
        <location evidence="2">Host cytoplasm</location>
    </subcellularLocation>
    <subcellularLocation>
        <location evidence="2">Host nucleus</location>
    </subcellularLocation>
</comment>
<comment type="domain">
    <text evidence="8">Ncore is globular and carries regions required for N self-assembly and RNA-binding. Ntail is an intrinsically disordered monomeric domain in the C-terminus.</text>
</comment>
<comment type="PTM">
    <text evidence="9">Phosphorylation at Thr-279 is required for the formation of the nucleocapsid.</text>
</comment>
<comment type="similarity">
    <text evidence="11">Belongs to the paramyxoviruses nucleocapsid family.</text>
</comment>
<protein>
    <recommendedName>
        <fullName>Nucleoprotein</fullName>
    </recommendedName>
    <alternativeName>
        <fullName>Nucleocapsid protein</fullName>
        <shortName>NP</shortName>
        <shortName>Protein N</shortName>
    </alternativeName>
</protein>
<keyword id="KW-0167">Capsid protein</keyword>
<keyword id="KW-1139">Helical capsid protein</keyword>
<keyword id="KW-1035">Host cytoplasm</keyword>
<keyword id="KW-1048">Host nucleus</keyword>
<keyword id="KW-0945">Host-virus interaction</keyword>
<keyword id="KW-0597">Phosphoprotein</keyword>
<keyword id="KW-0687">Ribonucleoprotein</keyword>
<keyword id="KW-0694">RNA-binding</keyword>
<keyword id="KW-0543">Viral nucleoprotein</keyword>
<keyword id="KW-0946">Virion</keyword>
<accession>P26029</accession>
<sequence>MATLLRSLALFKRNKDKPPITSGSGGAIRGIKHIIIVPIPGDSSITTRSRLLDRLVRLTGNPDVSGPKLTGALIGILSLFVESPGQLIQRITDDPGVSIRLLEVVQSDQSQSGLTFASRGTNMEDEADQYFSHDDPSSSAQSRFGWFENKEISDIEVQDPEGFNMILGTILAQIWVLLAKAVTAPDTAADSELRRWIKYTQQRRVVGEFRLERKWLDVVRNRIAEDLPLRRFMVALILDIKRTPGNKPRIAEMICDIDTYIVEAGLASFILTIKFGIETMYPALGLHEFAGELSTLESLMNLYQQMGETAPYMVILENSIQNKFSAGSYPLLWSYAMGVGVELENSMGGLNFSRSYFDPAYFRLGQEMVRRSAGKVSSTLASELGITAEDARLVSEIAMHTTEDRISRAVGPRQAQVSFLHGDQSENEPPRWGGKEDMRVKQSRGEARESYRETGPSRASDARAAHLPTDTPLDIDTASESSQDPQDSRRSAEALLRLQAMAGISEEQGSDTDTPRVYNDRDLLD</sequence>
<proteinExistence type="inferred from homology"/>
<dbReference type="EMBL" id="X16566">
    <property type="protein sequence ID" value="CAA34563.1"/>
    <property type="molecule type" value="Genomic_RNA"/>
</dbReference>
<dbReference type="SMR" id="P26029"/>
<dbReference type="GO" id="GO:0019029">
    <property type="term" value="C:helical viral capsid"/>
    <property type="evidence" value="ECO:0007669"/>
    <property type="project" value="UniProtKB-KW"/>
</dbReference>
<dbReference type="GO" id="GO:0030430">
    <property type="term" value="C:host cell cytoplasm"/>
    <property type="evidence" value="ECO:0007669"/>
    <property type="project" value="UniProtKB-SubCell"/>
</dbReference>
<dbReference type="GO" id="GO:0042025">
    <property type="term" value="C:host cell nucleus"/>
    <property type="evidence" value="ECO:0007669"/>
    <property type="project" value="UniProtKB-SubCell"/>
</dbReference>
<dbReference type="GO" id="GO:1990904">
    <property type="term" value="C:ribonucleoprotein complex"/>
    <property type="evidence" value="ECO:0007669"/>
    <property type="project" value="UniProtKB-KW"/>
</dbReference>
<dbReference type="GO" id="GO:0019013">
    <property type="term" value="C:viral nucleocapsid"/>
    <property type="evidence" value="ECO:0007669"/>
    <property type="project" value="UniProtKB-KW"/>
</dbReference>
<dbReference type="GO" id="GO:0003723">
    <property type="term" value="F:RNA binding"/>
    <property type="evidence" value="ECO:0007669"/>
    <property type="project" value="UniProtKB-KW"/>
</dbReference>
<dbReference type="GO" id="GO:0005198">
    <property type="term" value="F:structural molecule activity"/>
    <property type="evidence" value="ECO:0007669"/>
    <property type="project" value="InterPro"/>
</dbReference>
<dbReference type="InterPro" id="IPR002021">
    <property type="entry name" value="Paramyx_ncap"/>
</dbReference>
<dbReference type="Pfam" id="PF00973">
    <property type="entry name" value="Paramyxo_ncap"/>
    <property type="match status" value="1"/>
</dbReference>
<name>NCAP_MEASI</name>
<evidence type="ECO:0000250" key="1">
    <source>
        <dbReference type="UniProtKB" id="O57286"/>
    </source>
</evidence>
<evidence type="ECO:0000250" key="2">
    <source>
        <dbReference type="UniProtKB" id="P04851"/>
    </source>
</evidence>
<evidence type="ECO:0000250" key="3">
    <source>
        <dbReference type="UniProtKB" id="P06159"/>
    </source>
</evidence>
<evidence type="ECO:0000250" key="4">
    <source>
        <dbReference type="UniProtKB" id="P0DXN6"/>
    </source>
</evidence>
<evidence type="ECO:0000250" key="5">
    <source>
        <dbReference type="UniProtKB" id="P10050"/>
    </source>
</evidence>
<evidence type="ECO:0000250" key="6">
    <source>
        <dbReference type="UniProtKB" id="Q07097"/>
    </source>
</evidence>
<evidence type="ECO:0000250" key="7">
    <source>
        <dbReference type="UniProtKB" id="Q77M43"/>
    </source>
</evidence>
<evidence type="ECO:0000250" key="8">
    <source>
        <dbReference type="UniProtKB" id="Q89933"/>
    </source>
</evidence>
<evidence type="ECO:0000250" key="9">
    <source>
        <dbReference type="UniProtKB" id="Q9WMB5"/>
    </source>
</evidence>
<evidence type="ECO:0000256" key="10">
    <source>
        <dbReference type="SAM" id="MobiDB-lite"/>
    </source>
</evidence>
<evidence type="ECO:0000305" key="11"/>